<sequence length="301" mass="32938">MECAVDAQSLISISLRKIHNSRTQRGGIKLHKNLLVSYVLRNARQVYMNEKYAEIYRMQQYEEVMTVCNEIQELNPLDLAEDCEDQTADCCGSASESASLCGALLPAVGHQTSPAAQHIQPASACSVPLALQSEEVCKAAPEPSFYRSCCAEAYPVSNCDFSPVNNMHCNKTTVLDLDTHVVTTVENGYLHQDCCASLQQCCQGAQSPAKKRKLDFGYYVSEIEEAPDFTPCKRAKFEDSSYAITEPLDTSNISNLISIFGSGFSGLVSRQADLEQALNGQFCSKQALASLGAWTRAIVAF</sequence>
<reference key="1">
    <citation type="journal article" date="2013" name="Nature">
        <title>The zebrafish reference genome sequence and its relationship to the human genome.</title>
        <authorList>
            <person name="Howe K."/>
            <person name="Clark M.D."/>
            <person name="Torroja C.F."/>
            <person name="Torrance J."/>
            <person name="Berthelot C."/>
            <person name="Muffato M."/>
            <person name="Collins J.E."/>
            <person name="Humphray S."/>
            <person name="McLaren K."/>
            <person name="Matthews L."/>
            <person name="McLaren S."/>
            <person name="Sealy I."/>
            <person name="Caccamo M."/>
            <person name="Churcher C."/>
            <person name="Scott C."/>
            <person name="Barrett J.C."/>
            <person name="Koch R."/>
            <person name="Rauch G.J."/>
            <person name="White S."/>
            <person name="Chow W."/>
            <person name="Kilian B."/>
            <person name="Quintais L.T."/>
            <person name="Guerra-Assuncao J.A."/>
            <person name="Zhou Y."/>
            <person name="Gu Y."/>
            <person name="Yen J."/>
            <person name="Vogel J.H."/>
            <person name="Eyre T."/>
            <person name="Redmond S."/>
            <person name="Banerjee R."/>
            <person name="Chi J."/>
            <person name="Fu B."/>
            <person name="Langley E."/>
            <person name="Maguire S.F."/>
            <person name="Laird G.K."/>
            <person name="Lloyd D."/>
            <person name="Kenyon E."/>
            <person name="Donaldson S."/>
            <person name="Sehra H."/>
            <person name="Almeida-King J."/>
            <person name="Loveland J."/>
            <person name="Trevanion S."/>
            <person name="Jones M."/>
            <person name="Quail M."/>
            <person name="Willey D."/>
            <person name="Hunt A."/>
            <person name="Burton J."/>
            <person name="Sims S."/>
            <person name="McLay K."/>
            <person name="Plumb B."/>
            <person name="Davis J."/>
            <person name="Clee C."/>
            <person name="Oliver K."/>
            <person name="Clark R."/>
            <person name="Riddle C."/>
            <person name="Elliot D."/>
            <person name="Threadgold G."/>
            <person name="Harden G."/>
            <person name="Ware D."/>
            <person name="Begum S."/>
            <person name="Mortimore B."/>
            <person name="Kerry G."/>
            <person name="Heath P."/>
            <person name="Phillimore B."/>
            <person name="Tracey A."/>
            <person name="Corby N."/>
            <person name="Dunn M."/>
            <person name="Johnson C."/>
            <person name="Wood J."/>
            <person name="Clark S."/>
            <person name="Pelan S."/>
            <person name="Griffiths G."/>
            <person name="Smith M."/>
            <person name="Glithero R."/>
            <person name="Howden P."/>
            <person name="Barker N."/>
            <person name="Lloyd C."/>
            <person name="Stevens C."/>
            <person name="Harley J."/>
            <person name="Holt K."/>
            <person name="Panagiotidis G."/>
            <person name="Lovell J."/>
            <person name="Beasley H."/>
            <person name="Henderson C."/>
            <person name="Gordon D."/>
            <person name="Auger K."/>
            <person name="Wright D."/>
            <person name="Collins J."/>
            <person name="Raisen C."/>
            <person name="Dyer L."/>
            <person name="Leung K."/>
            <person name="Robertson L."/>
            <person name="Ambridge K."/>
            <person name="Leongamornlert D."/>
            <person name="McGuire S."/>
            <person name="Gilderthorp R."/>
            <person name="Griffiths C."/>
            <person name="Manthravadi D."/>
            <person name="Nichol S."/>
            <person name="Barker G."/>
            <person name="Whitehead S."/>
            <person name="Kay M."/>
            <person name="Brown J."/>
            <person name="Murnane C."/>
            <person name="Gray E."/>
            <person name="Humphries M."/>
            <person name="Sycamore N."/>
            <person name="Barker D."/>
            <person name="Saunders D."/>
            <person name="Wallis J."/>
            <person name="Babbage A."/>
            <person name="Hammond S."/>
            <person name="Mashreghi-Mohammadi M."/>
            <person name="Barr L."/>
            <person name="Martin S."/>
            <person name="Wray P."/>
            <person name="Ellington A."/>
            <person name="Matthews N."/>
            <person name="Ellwood M."/>
            <person name="Woodmansey R."/>
            <person name="Clark G."/>
            <person name="Cooper J."/>
            <person name="Tromans A."/>
            <person name="Grafham D."/>
            <person name="Skuce C."/>
            <person name="Pandian R."/>
            <person name="Andrews R."/>
            <person name="Harrison E."/>
            <person name="Kimberley A."/>
            <person name="Garnett J."/>
            <person name="Fosker N."/>
            <person name="Hall R."/>
            <person name="Garner P."/>
            <person name="Kelly D."/>
            <person name="Bird C."/>
            <person name="Palmer S."/>
            <person name="Gehring I."/>
            <person name="Berger A."/>
            <person name="Dooley C.M."/>
            <person name="Ersan-Urun Z."/>
            <person name="Eser C."/>
            <person name="Geiger H."/>
            <person name="Geisler M."/>
            <person name="Karotki L."/>
            <person name="Kirn A."/>
            <person name="Konantz J."/>
            <person name="Konantz M."/>
            <person name="Oberlander M."/>
            <person name="Rudolph-Geiger S."/>
            <person name="Teucke M."/>
            <person name="Lanz C."/>
            <person name="Raddatz G."/>
            <person name="Osoegawa K."/>
            <person name="Zhu B."/>
            <person name="Rapp A."/>
            <person name="Widaa S."/>
            <person name="Langford C."/>
            <person name="Yang F."/>
            <person name="Schuster S.C."/>
            <person name="Carter N.P."/>
            <person name="Harrow J."/>
            <person name="Ning Z."/>
            <person name="Herrero J."/>
            <person name="Searle S.M."/>
            <person name="Enright A."/>
            <person name="Geisler R."/>
            <person name="Plasterk R.H."/>
            <person name="Lee C."/>
            <person name="Westerfield M."/>
            <person name="de Jong P.J."/>
            <person name="Zon L.I."/>
            <person name="Postlethwait J.H."/>
            <person name="Nusslein-Volhard C."/>
            <person name="Hubbard T.J."/>
            <person name="Roest Crollius H."/>
            <person name="Rogers J."/>
            <person name="Stemple D.L."/>
        </authorList>
    </citation>
    <scope>NUCLEOTIDE SEQUENCE [LARGE SCALE GENOMIC DNA]</scope>
    <source>
        <strain>Tuebingen</strain>
    </source>
</reference>
<reference key="2">
    <citation type="submission" date="2004-02" db="EMBL/GenBank/DDBJ databases">
        <authorList>
            <consortium name="NIH - Zebrafish Gene Collection (ZGC) project"/>
        </authorList>
    </citation>
    <scope>NUCLEOTIDE SEQUENCE [LARGE SCALE MRNA]</scope>
    <source>
        <tissue>Embryo</tissue>
        <tissue>Eye</tissue>
    </source>
</reference>
<feature type="chain" id="PRO_0000334659" description="Immediate early response gene 5-like protein">
    <location>
        <begin position="1"/>
        <end position="301"/>
    </location>
</feature>
<feature type="sequence conflict" description="In Ref. 2; AAH66470." evidence="1" ref="2">
    <original>D</original>
    <variation>E</variation>
    <location>
        <position position="85"/>
    </location>
</feature>
<comment type="similarity">
    <text evidence="1">Belongs to the IER family.</text>
</comment>
<comment type="sequence caution" evidence="1">
    <conflict type="erroneous initiation">
        <sequence resource="EMBL-CDS" id="AAH59641"/>
    </conflict>
</comment>
<comment type="sequence caution" evidence="1">
    <conflict type="erroneous initiation">
        <sequence resource="EMBL-CDS" id="AAH66470"/>
    </conflict>
</comment>
<comment type="sequence caution" evidence="1">
    <conflict type="erroneous initiation">
        <sequence resource="EMBL-CDS" id="CAM13727"/>
    </conflict>
</comment>
<gene>
    <name type="primary">ier5l</name>
    <name type="ORF">si:ch211-208h16.10</name>
    <name type="ORF">zgc:77455</name>
</gene>
<organism>
    <name type="scientific">Danio rerio</name>
    <name type="common">Zebrafish</name>
    <name type="synonym">Brachydanio rerio</name>
    <dbReference type="NCBI Taxonomy" id="7955"/>
    <lineage>
        <taxon>Eukaryota</taxon>
        <taxon>Metazoa</taxon>
        <taxon>Chordata</taxon>
        <taxon>Craniata</taxon>
        <taxon>Vertebrata</taxon>
        <taxon>Euteleostomi</taxon>
        <taxon>Actinopterygii</taxon>
        <taxon>Neopterygii</taxon>
        <taxon>Teleostei</taxon>
        <taxon>Ostariophysi</taxon>
        <taxon>Cypriniformes</taxon>
        <taxon>Danionidae</taxon>
        <taxon>Danioninae</taxon>
        <taxon>Danio</taxon>
    </lineage>
</organism>
<dbReference type="EMBL" id="CR925757">
    <property type="protein sequence ID" value="CAM13727.1"/>
    <property type="status" value="ALT_INIT"/>
    <property type="molecule type" value="Genomic_DNA"/>
</dbReference>
<dbReference type="EMBL" id="BC059641">
    <property type="protein sequence ID" value="AAH59641.1"/>
    <property type="status" value="ALT_INIT"/>
    <property type="molecule type" value="mRNA"/>
</dbReference>
<dbReference type="EMBL" id="BC066470">
    <property type="protein sequence ID" value="AAH66470.1"/>
    <property type="status" value="ALT_INIT"/>
    <property type="molecule type" value="mRNA"/>
</dbReference>
<dbReference type="RefSeq" id="NP_956048.1">
    <property type="nucleotide sequence ID" value="NM_199754.1"/>
</dbReference>
<dbReference type="SMR" id="Q6NYT3"/>
<dbReference type="FunCoup" id="Q6NYT3">
    <property type="interactions" value="1071"/>
</dbReference>
<dbReference type="STRING" id="7955.ENSDARP00000071657"/>
<dbReference type="PaxDb" id="7955-ENSDARP00000071657"/>
<dbReference type="Ensembl" id="ENSDART00000180452">
    <property type="protein sequence ID" value="ENSDARP00000153430"/>
    <property type="gene ID" value="ENSDARG00000114072"/>
</dbReference>
<dbReference type="Ensembl" id="ENSDART00000186789">
    <property type="protein sequence ID" value="ENSDARP00000150165"/>
    <property type="gene ID" value="ENSDARG00000110793"/>
</dbReference>
<dbReference type="GeneID" id="326935"/>
<dbReference type="KEGG" id="dre:326935"/>
<dbReference type="AGR" id="ZFIN:ZDB-GENE-030131-5134"/>
<dbReference type="CTD" id="389792"/>
<dbReference type="ZFIN" id="ZDB-GENE-030131-5134">
    <property type="gene designation" value="ier5l"/>
</dbReference>
<dbReference type="eggNOG" id="ENOG502QUU4">
    <property type="taxonomic scope" value="Eukaryota"/>
</dbReference>
<dbReference type="InParanoid" id="Q6NYT3"/>
<dbReference type="OMA" id="QDCCCDA"/>
<dbReference type="OrthoDB" id="6358394at2759"/>
<dbReference type="PhylomeDB" id="Q6NYT3"/>
<dbReference type="TreeFam" id="TF331376"/>
<dbReference type="PRO" id="PR:Q6NYT3"/>
<dbReference type="Proteomes" id="UP000000437">
    <property type="component" value="Alternate scaffold 5"/>
</dbReference>
<dbReference type="Proteomes" id="UP000000437">
    <property type="component" value="Chromosome 5"/>
</dbReference>
<dbReference type="Bgee" id="ENSDARG00000114072">
    <property type="expression patterns" value="Expressed in midbrain neural keel and 6 other cell types or tissues"/>
</dbReference>
<dbReference type="InterPro" id="IPR008653">
    <property type="entry name" value="IER"/>
</dbReference>
<dbReference type="PANTHER" id="PTHR15895">
    <property type="entry name" value="IMMEDIATE EARLY RESPONSE GENE"/>
    <property type="match status" value="1"/>
</dbReference>
<dbReference type="Pfam" id="PF05760">
    <property type="entry name" value="IER"/>
    <property type="match status" value="1"/>
</dbReference>
<protein>
    <recommendedName>
        <fullName>Immediate early response gene 5-like protein</fullName>
    </recommendedName>
</protein>
<name>IER5L_DANRE</name>
<accession>Q6NYT3</accession>
<accession>Q6PBN7</accession>
<evidence type="ECO:0000305" key="1"/>
<keyword id="KW-1185">Reference proteome</keyword>
<proteinExistence type="evidence at transcript level"/>